<keyword id="KW-0997">Cell inner membrane</keyword>
<keyword id="KW-1003">Cell membrane</keyword>
<keyword id="KW-0285">Flavoprotein</keyword>
<keyword id="KW-0288">FMN</keyword>
<keyword id="KW-0472">Membrane</keyword>
<keyword id="KW-0520">NAD</keyword>
<keyword id="KW-0560">Oxidoreductase</keyword>
<keyword id="KW-1185">Reference proteome</keyword>
<evidence type="ECO:0000255" key="1">
    <source>
        <dbReference type="HAMAP-Rule" id="MF_01414"/>
    </source>
</evidence>
<name>KEFF_SHIFL</name>
<proteinExistence type="inferred from homology"/>
<dbReference type="EC" id="1.6.5.2" evidence="1"/>
<dbReference type="EMBL" id="AE005674">
    <property type="protein sequence ID" value="AAN41709.1"/>
    <property type="molecule type" value="Genomic_DNA"/>
</dbReference>
<dbReference type="EMBL" id="AE014073">
    <property type="protein sequence ID" value="AAP15589.1"/>
    <property type="molecule type" value="Genomic_DNA"/>
</dbReference>
<dbReference type="RefSeq" id="WP_000600737.1">
    <property type="nucleotide sequence ID" value="NZ_WPGW01000005.1"/>
</dbReference>
<dbReference type="SMR" id="Q83SQ4"/>
<dbReference type="STRING" id="198214.SF0043"/>
<dbReference type="PaxDb" id="198214-SF0043"/>
<dbReference type="GeneID" id="86862558"/>
<dbReference type="KEGG" id="sfl:SF0043"/>
<dbReference type="KEGG" id="sfx:S0045"/>
<dbReference type="PATRIC" id="fig|198214.7.peg.51"/>
<dbReference type="HOGENOM" id="CLU_058643_0_2_6"/>
<dbReference type="Proteomes" id="UP000001006">
    <property type="component" value="Chromosome"/>
</dbReference>
<dbReference type="Proteomes" id="UP000002673">
    <property type="component" value="Chromosome"/>
</dbReference>
<dbReference type="GO" id="GO:0005886">
    <property type="term" value="C:plasma membrane"/>
    <property type="evidence" value="ECO:0007669"/>
    <property type="project" value="UniProtKB-SubCell"/>
</dbReference>
<dbReference type="GO" id="GO:0009055">
    <property type="term" value="F:electron transfer activity"/>
    <property type="evidence" value="ECO:0007669"/>
    <property type="project" value="TreeGrafter"/>
</dbReference>
<dbReference type="GO" id="GO:0010181">
    <property type="term" value="F:FMN binding"/>
    <property type="evidence" value="ECO:0007669"/>
    <property type="project" value="UniProtKB-UniRule"/>
</dbReference>
<dbReference type="GO" id="GO:0050136">
    <property type="term" value="F:NADH:ubiquinone reductase (non-electrogenic) activity"/>
    <property type="evidence" value="ECO:0007669"/>
    <property type="project" value="RHEA"/>
</dbReference>
<dbReference type="GO" id="GO:0008753">
    <property type="term" value="F:NADPH dehydrogenase (quinone) activity"/>
    <property type="evidence" value="ECO:0007669"/>
    <property type="project" value="RHEA"/>
</dbReference>
<dbReference type="GO" id="GO:1901381">
    <property type="term" value="P:positive regulation of potassium ion transmembrane transport"/>
    <property type="evidence" value="ECO:0007669"/>
    <property type="project" value="UniProtKB-UniRule"/>
</dbReference>
<dbReference type="GO" id="GO:0006813">
    <property type="term" value="P:potassium ion transport"/>
    <property type="evidence" value="ECO:0007669"/>
    <property type="project" value="InterPro"/>
</dbReference>
<dbReference type="FunFam" id="3.40.50.360:FF:000008">
    <property type="entry name" value="Glutathione-regulated potassium-efflux system ancillary protein KefF"/>
    <property type="match status" value="1"/>
</dbReference>
<dbReference type="Gene3D" id="3.40.50.360">
    <property type="match status" value="1"/>
</dbReference>
<dbReference type="HAMAP" id="MF_01414">
    <property type="entry name" value="K_H_efflux_KefF"/>
    <property type="match status" value="1"/>
</dbReference>
<dbReference type="InterPro" id="IPR003680">
    <property type="entry name" value="Flavodoxin_fold"/>
</dbReference>
<dbReference type="InterPro" id="IPR029039">
    <property type="entry name" value="Flavoprotein-like_sf"/>
</dbReference>
<dbReference type="InterPro" id="IPR023948">
    <property type="entry name" value="K_H_efflux_KefF"/>
</dbReference>
<dbReference type="InterPro" id="IPR046980">
    <property type="entry name" value="KefG/KefF"/>
</dbReference>
<dbReference type="NCBIfam" id="NF002044">
    <property type="entry name" value="PRK00871.1"/>
    <property type="match status" value="1"/>
</dbReference>
<dbReference type="PANTHER" id="PTHR47307:SF2">
    <property type="entry name" value="GLUTATHIONE-REGULATED POTASSIUM-EFFLUX SYSTEM ANCILLARY PROTEIN KEFF"/>
    <property type="match status" value="1"/>
</dbReference>
<dbReference type="PANTHER" id="PTHR47307">
    <property type="entry name" value="GLUTATHIONE-REGULATED POTASSIUM-EFFLUX SYSTEM ANCILLARY PROTEIN KEFG"/>
    <property type="match status" value="1"/>
</dbReference>
<dbReference type="Pfam" id="PF02525">
    <property type="entry name" value="Flavodoxin_2"/>
    <property type="match status" value="1"/>
</dbReference>
<dbReference type="SUPFAM" id="SSF52218">
    <property type="entry name" value="Flavoproteins"/>
    <property type="match status" value="1"/>
</dbReference>
<sequence length="176" mass="20136">MILIIYAHPYPHHSHANKRMLEQARTLEGVEIRSLYQLYPDFNIDIAAEQEALSRADLIVWQHPMQWYSIPPLLKLWIDKVLSHGWAYGHGGTALHGKHLLWAVTTGGGESHFEIGAHPGFDVLSQPLQATAIYCGLNWLPPFAMHCTFICDDETLEGQARHYKQRLLEWQEAHHG</sequence>
<gene>
    <name evidence="1" type="primary">kefF</name>
    <name type="ordered locus">SF0043</name>
    <name type="ordered locus">S0045</name>
</gene>
<protein>
    <recommendedName>
        <fullName evidence="1">Glutathione-regulated potassium-efflux system ancillary protein KefF</fullName>
    </recommendedName>
    <alternativeName>
        <fullName evidence="1">Quinone oxidoreductase KefF</fullName>
        <ecNumber evidence="1">1.6.5.2</ecNumber>
    </alternativeName>
</protein>
<reference key="1">
    <citation type="journal article" date="2002" name="Nucleic Acids Res.">
        <title>Genome sequence of Shigella flexneri 2a: insights into pathogenicity through comparison with genomes of Escherichia coli K12 and O157.</title>
        <authorList>
            <person name="Jin Q."/>
            <person name="Yuan Z."/>
            <person name="Xu J."/>
            <person name="Wang Y."/>
            <person name="Shen Y."/>
            <person name="Lu W."/>
            <person name="Wang J."/>
            <person name="Liu H."/>
            <person name="Yang J."/>
            <person name="Yang F."/>
            <person name="Zhang X."/>
            <person name="Zhang J."/>
            <person name="Yang G."/>
            <person name="Wu H."/>
            <person name="Qu D."/>
            <person name="Dong J."/>
            <person name="Sun L."/>
            <person name="Xue Y."/>
            <person name="Zhao A."/>
            <person name="Gao Y."/>
            <person name="Zhu J."/>
            <person name="Kan B."/>
            <person name="Ding K."/>
            <person name="Chen S."/>
            <person name="Cheng H."/>
            <person name="Yao Z."/>
            <person name="He B."/>
            <person name="Chen R."/>
            <person name="Ma D."/>
            <person name="Qiang B."/>
            <person name="Wen Y."/>
            <person name="Hou Y."/>
            <person name="Yu J."/>
        </authorList>
    </citation>
    <scope>NUCLEOTIDE SEQUENCE [LARGE SCALE GENOMIC DNA]</scope>
    <source>
        <strain>301 / Serotype 2a</strain>
    </source>
</reference>
<reference key="2">
    <citation type="journal article" date="2003" name="Infect. Immun.">
        <title>Complete genome sequence and comparative genomics of Shigella flexneri serotype 2a strain 2457T.</title>
        <authorList>
            <person name="Wei J."/>
            <person name="Goldberg M.B."/>
            <person name="Burland V."/>
            <person name="Venkatesan M.M."/>
            <person name="Deng W."/>
            <person name="Fournier G."/>
            <person name="Mayhew G.F."/>
            <person name="Plunkett G. III"/>
            <person name="Rose D.J."/>
            <person name="Darling A."/>
            <person name="Mau B."/>
            <person name="Perna N.T."/>
            <person name="Payne S.M."/>
            <person name="Runyen-Janecky L.J."/>
            <person name="Zhou S."/>
            <person name="Schwartz D.C."/>
            <person name="Blattner F.R."/>
        </authorList>
    </citation>
    <scope>NUCLEOTIDE SEQUENCE [LARGE SCALE GENOMIC DNA]</scope>
    <source>
        <strain>ATCC 700930 / 2457T / Serotype 2a</strain>
    </source>
</reference>
<organism>
    <name type="scientific">Shigella flexneri</name>
    <dbReference type="NCBI Taxonomy" id="623"/>
    <lineage>
        <taxon>Bacteria</taxon>
        <taxon>Pseudomonadati</taxon>
        <taxon>Pseudomonadota</taxon>
        <taxon>Gammaproteobacteria</taxon>
        <taxon>Enterobacterales</taxon>
        <taxon>Enterobacteriaceae</taxon>
        <taxon>Shigella</taxon>
    </lineage>
</organism>
<accession>Q83SQ4</accession>
<comment type="function">
    <text evidence="1">Regulatory subunit of a potassium efflux system that confers protection against electrophiles. Required for full activity of KefC. Shows redox enzymatic activity, but this enzymatic activity is not required for activation of KefC.</text>
</comment>
<comment type="catalytic activity">
    <reaction evidence="1">
        <text>a quinone + NADH + H(+) = a quinol + NAD(+)</text>
        <dbReference type="Rhea" id="RHEA:46160"/>
        <dbReference type="ChEBI" id="CHEBI:15378"/>
        <dbReference type="ChEBI" id="CHEBI:24646"/>
        <dbReference type="ChEBI" id="CHEBI:57540"/>
        <dbReference type="ChEBI" id="CHEBI:57945"/>
        <dbReference type="ChEBI" id="CHEBI:132124"/>
        <dbReference type="EC" id="1.6.5.2"/>
    </reaction>
</comment>
<comment type="catalytic activity">
    <reaction evidence="1">
        <text>a quinone + NADPH + H(+) = a quinol + NADP(+)</text>
        <dbReference type="Rhea" id="RHEA:46164"/>
        <dbReference type="ChEBI" id="CHEBI:15378"/>
        <dbReference type="ChEBI" id="CHEBI:24646"/>
        <dbReference type="ChEBI" id="CHEBI:57783"/>
        <dbReference type="ChEBI" id="CHEBI:58349"/>
        <dbReference type="ChEBI" id="CHEBI:132124"/>
        <dbReference type="EC" id="1.6.5.2"/>
    </reaction>
</comment>
<comment type="cofactor">
    <cofactor evidence="1">
        <name>FMN</name>
        <dbReference type="ChEBI" id="CHEBI:58210"/>
    </cofactor>
</comment>
<comment type="subunit">
    <text evidence="1">Homodimer. Interacts with KefC.</text>
</comment>
<comment type="subcellular location">
    <subcellularLocation>
        <location evidence="1">Cell inner membrane</location>
        <topology evidence="1">Peripheral membrane protein</topology>
        <orientation evidence="1">Cytoplasmic side</orientation>
    </subcellularLocation>
</comment>
<comment type="similarity">
    <text evidence="1">Belongs to the NAD(P)H dehydrogenase (quinone) family. KefF subfamily.</text>
</comment>
<feature type="chain" id="PRO_0000071641" description="Glutathione-regulated potassium-efflux system ancillary protein KefF">
    <location>
        <begin position="1"/>
        <end position="176"/>
    </location>
</feature>
<feature type="binding site" evidence="1">
    <location>
        <position position="8"/>
    </location>
    <ligand>
        <name>FMN</name>
        <dbReference type="ChEBI" id="CHEBI:58210"/>
    </ligand>
</feature>
<feature type="binding site" evidence="1">
    <location>
        <begin position="14"/>
        <end position="17"/>
    </location>
    <ligand>
        <name>FMN</name>
        <dbReference type="ChEBI" id="CHEBI:58210"/>
    </ligand>
</feature>
<feature type="binding site" evidence="1">
    <location>
        <begin position="65"/>
        <end position="68"/>
    </location>
    <ligand>
        <name>FMN</name>
        <dbReference type="ChEBI" id="CHEBI:58210"/>
    </ligand>
</feature>
<feature type="binding site" evidence="1">
    <location>
        <begin position="105"/>
        <end position="108"/>
    </location>
    <ligand>
        <name>FMN</name>
        <dbReference type="ChEBI" id="CHEBI:58210"/>
    </ligand>
</feature>